<gene>
    <name type="ORF">SPBC16A3.02c</name>
</gene>
<proteinExistence type="inferred from homology"/>
<sequence length="347" mass="38187">MSSETKSEFGTKSAWLYNRTGKPKDVLYLEKGLHIPNPAELGPYDVLVEVVATSINPLDYKLMNTYQMIAKALFKLPNIPGYDFAGRVLAVGSEVKEFSATQRVWGCQSFPRAGRQGGSCATHIVTGDKDVWHLPDGVSFNEGAGFGIAGLTAWEVLVRQMKVKPGTKLVIEGASGGVGTFAVALAKALECEVTTISSTENLDLCKSLGATHTLDYKKDNLVERLADLGPYDFVFDCVNDNVLYRASSKFVKPDGAFFGIGGDITLSYVGSRLSRTLRPRVLGGSSHSYYNILLHVDQEMLRDFVDFVMKHNIKTVIDSVYDFEDTVEAFNRLMTHRCKGKVIIKTD</sequence>
<keyword id="KW-0256">Endoplasmic reticulum</keyword>
<keyword id="KW-0333">Golgi apparatus</keyword>
<keyword id="KW-0560">Oxidoreductase</keyword>
<keyword id="KW-1185">Reference proteome</keyword>
<accession>O42909</accession>
<dbReference type="EC" id="1.-.-.-"/>
<dbReference type="EMBL" id="CU329671">
    <property type="protein sequence ID" value="CAA16853.1"/>
    <property type="molecule type" value="Genomic_DNA"/>
</dbReference>
<dbReference type="PIR" id="T39550">
    <property type="entry name" value="T39550"/>
</dbReference>
<dbReference type="RefSeq" id="NP_596787.1">
    <property type="nucleotide sequence ID" value="NM_001023808.2"/>
</dbReference>
<dbReference type="SMR" id="O42909"/>
<dbReference type="BioGRID" id="276579">
    <property type="interactions" value="4"/>
</dbReference>
<dbReference type="FunCoup" id="O42909">
    <property type="interactions" value="356"/>
</dbReference>
<dbReference type="STRING" id="284812.O42909"/>
<dbReference type="iPTMnet" id="O42909"/>
<dbReference type="PaxDb" id="4896-SPBC16A3.02c.1"/>
<dbReference type="EnsemblFungi" id="SPBC16A3.02c.1">
    <property type="protein sequence ID" value="SPBC16A3.02c.1:pep"/>
    <property type="gene ID" value="SPBC16A3.02c"/>
</dbReference>
<dbReference type="KEGG" id="spo:2540039"/>
<dbReference type="PomBase" id="SPBC16A3.02c"/>
<dbReference type="VEuPathDB" id="FungiDB:SPBC16A3.02c"/>
<dbReference type="eggNOG" id="KOG1198">
    <property type="taxonomic scope" value="Eukaryota"/>
</dbReference>
<dbReference type="HOGENOM" id="CLU_026673_3_3_1"/>
<dbReference type="InParanoid" id="O42909"/>
<dbReference type="OMA" id="SGGCGIF"/>
<dbReference type="PhylomeDB" id="O42909"/>
<dbReference type="PRO" id="PR:O42909"/>
<dbReference type="Proteomes" id="UP000002485">
    <property type="component" value="Chromosome II"/>
</dbReference>
<dbReference type="GO" id="GO:0005737">
    <property type="term" value="C:cytoplasm"/>
    <property type="evidence" value="ECO:0007005"/>
    <property type="project" value="PomBase"/>
</dbReference>
<dbReference type="GO" id="GO:0005783">
    <property type="term" value="C:endoplasmic reticulum"/>
    <property type="evidence" value="ECO:0007005"/>
    <property type="project" value="PomBase"/>
</dbReference>
<dbReference type="GO" id="GO:0005794">
    <property type="term" value="C:Golgi apparatus"/>
    <property type="evidence" value="ECO:0007005"/>
    <property type="project" value="PomBase"/>
</dbReference>
<dbReference type="GO" id="GO:0005739">
    <property type="term" value="C:mitochondrion"/>
    <property type="evidence" value="ECO:0000266"/>
    <property type="project" value="PomBase"/>
</dbReference>
<dbReference type="GO" id="GO:0016616">
    <property type="term" value="F:oxidoreductase activity, acting on the CH-OH group of donors, NAD or NADP as acceptor"/>
    <property type="evidence" value="ECO:0000255"/>
    <property type="project" value="PomBase"/>
</dbReference>
<dbReference type="CDD" id="cd08267">
    <property type="entry name" value="MDR1"/>
    <property type="match status" value="1"/>
</dbReference>
<dbReference type="Gene3D" id="3.90.180.10">
    <property type="entry name" value="Medium-chain alcohol dehydrogenases, catalytic domain"/>
    <property type="match status" value="1"/>
</dbReference>
<dbReference type="Gene3D" id="3.40.50.720">
    <property type="entry name" value="NAD(P)-binding Rossmann-like Domain"/>
    <property type="match status" value="1"/>
</dbReference>
<dbReference type="InterPro" id="IPR013154">
    <property type="entry name" value="ADH-like_N"/>
</dbReference>
<dbReference type="InterPro" id="IPR011032">
    <property type="entry name" value="GroES-like_sf"/>
</dbReference>
<dbReference type="InterPro" id="IPR036291">
    <property type="entry name" value="NAD(P)-bd_dom_sf"/>
</dbReference>
<dbReference type="InterPro" id="IPR020843">
    <property type="entry name" value="PKS_ER"/>
</dbReference>
<dbReference type="InterPro" id="IPR050700">
    <property type="entry name" value="YIM1/Zinc_Alcohol_DH_Fams"/>
</dbReference>
<dbReference type="PANTHER" id="PTHR11695">
    <property type="entry name" value="ALCOHOL DEHYDROGENASE RELATED"/>
    <property type="match status" value="1"/>
</dbReference>
<dbReference type="PANTHER" id="PTHR11695:SF294">
    <property type="entry name" value="RETICULON-4-INTERACTING PROTEIN 1, MITOCHONDRIAL"/>
    <property type="match status" value="1"/>
</dbReference>
<dbReference type="Pfam" id="PF08240">
    <property type="entry name" value="ADH_N"/>
    <property type="match status" value="1"/>
</dbReference>
<dbReference type="Pfam" id="PF13602">
    <property type="entry name" value="ADH_zinc_N_2"/>
    <property type="match status" value="1"/>
</dbReference>
<dbReference type="SMART" id="SM00829">
    <property type="entry name" value="PKS_ER"/>
    <property type="match status" value="1"/>
</dbReference>
<dbReference type="SUPFAM" id="SSF50129">
    <property type="entry name" value="GroES-like"/>
    <property type="match status" value="1"/>
</dbReference>
<dbReference type="SUPFAM" id="SSF51735">
    <property type="entry name" value="NAD(P)-binding Rossmann-fold domains"/>
    <property type="match status" value="1"/>
</dbReference>
<reference key="1">
    <citation type="journal article" date="2002" name="Nature">
        <title>The genome sequence of Schizosaccharomyces pombe.</title>
        <authorList>
            <person name="Wood V."/>
            <person name="Gwilliam R."/>
            <person name="Rajandream M.A."/>
            <person name="Lyne M.H."/>
            <person name="Lyne R."/>
            <person name="Stewart A."/>
            <person name="Sgouros J.G."/>
            <person name="Peat N."/>
            <person name="Hayles J."/>
            <person name="Baker S.G."/>
            <person name="Basham D."/>
            <person name="Bowman S."/>
            <person name="Brooks K."/>
            <person name="Brown D."/>
            <person name="Brown S."/>
            <person name="Chillingworth T."/>
            <person name="Churcher C.M."/>
            <person name="Collins M."/>
            <person name="Connor R."/>
            <person name="Cronin A."/>
            <person name="Davis P."/>
            <person name="Feltwell T."/>
            <person name="Fraser A."/>
            <person name="Gentles S."/>
            <person name="Goble A."/>
            <person name="Hamlin N."/>
            <person name="Harris D.E."/>
            <person name="Hidalgo J."/>
            <person name="Hodgson G."/>
            <person name="Holroyd S."/>
            <person name="Hornsby T."/>
            <person name="Howarth S."/>
            <person name="Huckle E.J."/>
            <person name="Hunt S."/>
            <person name="Jagels K."/>
            <person name="James K.D."/>
            <person name="Jones L."/>
            <person name="Jones M."/>
            <person name="Leather S."/>
            <person name="McDonald S."/>
            <person name="McLean J."/>
            <person name="Mooney P."/>
            <person name="Moule S."/>
            <person name="Mungall K.L."/>
            <person name="Murphy L.D."/>
            <person name="Niblett D."/>
            <person name="Odell C."/>
            <person name="Oliver K."/>
            <person name="O'Neil S."/>
            <person name="Pearson D."/>
            <person name="Quail M.A."/>
            <person name="Rabbinowitsch E."/>
            <person name="Rutherford K.M."/>
            <person name="Rutter S."/>
            <person name="Saunders D."/>
            <person name="Seeger K."/>
            <person name="Sharp S."/>
            <person name="Skelton J."/>
            <person name="Simmonds M.N."/>
            <person name="Squares R."/>
            <person name="Squares S."/>
            <person name="Stevens K."/>
            <person name="Taylor K."/>
            <person name="Taylor R.G."/>
            <person name="Tivey A."/>
            <person name="Walsh S.V."/>
            <person name="Warren T."/>
            <person name="Whitehead S."/>
            <person name="Woodward J.R."/>
            <person name="Volckaert G."/>
            <person name="Aert R."/>
            <person name="Robben J."/>
            <person name="Grymonprez B."/>
            <person name="Weltjens I."/>
            <person name="Vanstreels E."/>
            <person name="Rieger M."/>
            <person name="Schaefer M."/>
            <person name="Mueller-Auer S."/>
            <person name="Gabel C."/>
            <person name="Fuchs M."/>
            <person name="Duesterhoeft A."/>
            <person name="Fritzc C."/>
            <person name="Holzer E."/>
            <person name="Moestl D."/>
            <person name="Hilbert H."/>
            <person name="Borzym K."/>
            <person name="Langer I."/>
            <person name="Beck A."/>
            <person name="Lehrach H."/>
            <person name="Reinhardt R."/>
            <person name="Pohl T.M."/>
            <person name="Eger P."/>
            <person name="Zimmermann W."/>
            <person name="Wedler H."/>
            <person name="Wambutt R."/>
            <person name="Purnelle B."/>
            <person name="Goffeau A."/>
            <person name="Cadieu E."/>
            <person name="Dreano S."/>
            <person name="Gloux S."/>
            <person name="Lelaure V."/>
            <person name="Mottier S."/>
            <person name="Galibert F."/>
            <person name="Aves S.J."/>
            <person name="Xiang Z."/>
            <person name="Hunt C."/>
            <person name="Moore K."/>
            <person name="Hurst S.M."/>
            <person name="Lucas M."/>
            <person name="Rochet M."/>
            <person name="Gaillardin C."/>
            <person name="Tallada V.A."/>
            <person name="Garzon A."/>
            <person name="Thode G."/>
            <person name="Daga R.R."/>
            <person name="Cruzado L."/>
            <person name="Jimenez J."/>
            <person name="Sanchez M."/>
            <person name="del Rey F."/>
            <person name="Benito J."/>
            <person name="Dominguez A."/>
            <person name="Revuelta J.L."/>
            <person name="Moreno S."/>
            <person name="Armstrong J."/>
            <person name="Forsburg S.L."/>
            <person name="Cerutti L."/>
            <person name="Lowe T."/>
            <person name="McCombie W.R."/>
            <person name="Paulsen I."/>
            <person name="Potashkin J."/>
            <person name="Shpakovski G.V."/>
            <person name="Ussery D."/>
            <person name="Barrell B.G."/>
            <person name="Nurse P."/>
        </authorList>
    </citation>
    <scope>NUCLEOTIDE SEQUENCE [LARGE SCALE GENOMIC DNA]</scope>
    <source>
        <strain>972 / ATCC 24843</strain>
    </source>
</reference>
<reference key="2">
    <citation type="journal article" date="2006" name="Nat. Biotechnol.">
        <title>ORFeome cloning and global analysis of protein localization in the fission yeast Schizosaccharomyces pombe.</title>
        <authorList>
            <person name="Matsuyama A."/>
            <person name="Arai R."/>
            <person name="Yashiroda Y."/>
            <person name="Shirai A."/>
            <person name="Kamata A."/>
            <person name="Sekido S."/>
            <person name="Kobayashi Y."/>
            <person name="Hashimoto A."/>
            <person name="Hamamoto M."/>
            <person name="Hiraoka Y."/>
            <person name="Horinouchi S."/>
            <person name="Yoshida M."/>
        </authorList>
    </citation>
    <scope>SUBCELLULAR LOCATION [LARGE SCALE ANALYSIS]</scope>
</reference>
<organism>
    <name type="scientific">Schizosaccharomyces pombe (strain 972 / ATCC 24843)</name>
    <name type="common">Fission yeast</name>
    <dbReference type="NCBI Taxonomy" id="284812"/>
    <lineage>
        <taxon>Eukaryota</taxon>
        <taxon>Fungi</taxon>
        <taxon>Dikarya</taxon>
        <taxon>Ascomycota</taxon>
        <taxon>Taphrinomycotina</taxon>
        <taxon>Schizosaccharomycetes</taxon>
        <taxon>Schizosaccharomycetales</taxon>
        <taxon>Schizosaccharomycetaceae</taxon>
        <taxon>Schizosaccharomyces</taxon>
    </lineage>
</organism>
<protein>
    <recommendedName>
        <fullName>Zinc-type alcohol dehydrogenase-like protein C16A3.02c</fullName>
        <ecNumber>1.-.-.-</ecNumber>
    </recommendedName>
</protein>
<comment type="subcellular location">
    <subcellularLocation>
        <location evidence="1">Golgi apparatus</location>
    </subcellularLocation>
    <subcellularLocation>
        <location evidence="1">Endoplasmic reticulum</location>
    </subcellularLocation>
</comment>
<comment type="similarity">
    <text evidence="2">Belongs to the zinc-containing alcohol dehydrogenase family. Quinone oxidoreductase subfamily.</text>
</comment>
<evidence type="ECO:0000269" key="1">
    <source>
    </source>
</evidence>
<evidence type="ECO:0000305" key="2"/>
<name>YBI2_SCHPO</name>
<feature type="chain" id="PRO_0000372424" description="Zinc-type alcohol dehydrogenase-like protein C16A3.02c">
    <location>
        <begin position="1"/>
        <end position="347"/>
    </location>
</feature>